<sequence>MRITIRDIQQMRDRGERIPMVTAYDYTSAQIADRAGIPLILVGDSLGMVVLGYNSTVPVTLDDMIHHTRAVVRGTQKALVIGDLPFLTYTSPEQAMQSAGRMLQEAGAQAVKLEGGVHIAPTIARLVQAGIPVMGHIGFTPQAVNQIGLRVQGRRAAEAQRLLADALAVQEAGAFAIVLELVPAELAQAITERLRIPTIGIGAGAGCSGQVQVWHDMLGLYSDFLPRHAKRYADLATIIAEALSQYASDVRNGTFPGPEHSSRMDPAELAAALGSQDQATE</sequence>
<gene>
    <name evidence="1" type="primary">panB</name>
    <name type="ordered locus">Chy400_2380</name>
</gene>
<organism>
    <name type="scientific">Chloroflexus aurantiacus (strain ATCC 29364 / DSM 637 / Y-400-fl)</name>
    <dbReference type="NCBI Taxonomy" id="480224"/>
    <lineage>
        <taxon>Bacteria</taxon>
        <taxon>Bacillati</taxon>
        <taxon>Chloroflexota</taxon>
        <taxon>Chloroflexia</taxon>
        <taxon>Chloroflexales</taxon>
        <taxon>Chloroflexineae</taxon>
        <taxon>Chloroflexaceae</taxon>
        <taxon>Chloroflexus</taxon>
    </lineage>
</organism>
<name>PANB_CHLSY</name>
<feature type="chain" id="PRO_1000123376" description="3-methyl-2-oxobutanoate hydroxymethyltransferase">
    <location>
        <begin position="1"/>
        <end position="281"/>
    </location>
</feature>
<feature type="region of interest" description="Disordered" evidence="2">
    <location>
        <begin position="251"/>
        <end position="281"/>
    </location>
</feature>
<feature type="active site" description="Proton acceptor" evidence="1">
    <location>
        <position position="180"/>
    </location>
</feature>
<feature type="binding site" evidence="1">
    <location>
        <begin position="44"/>
        <end position="45"/>
    </location>
    <ligand>
        <name>3-methyl-2-oxobutanoate</name>
        <dbReference type="ChEBI" id="CHEBI:11851"/>
    </ligand>
</feature>
<feature type="binding site" evidence="1">
    <location>
        <position position="44"/>
    </location>
    <ligand>
        <name>Mg(2+)</name>
        <dbReference type="ChEBI" id="CHEBI:18420"/>
    </ligand>
</feature>
<feature type="binding site" evidence="1">
    <location>
        <position position="83"/>
    </location>
    <ligand>
        <name>3-methyl-2-oxobutanoate</name>
        <dbReference type="ChEBI" id="CHEBI:11851"/>
    </ligand>
</feature>
<feature type="binding site" evidence="1">
    <location>
        <position position="83"/>
    </location>
    <ligand>
        <name>Mg(2+)</name>
        <dbReference type="ChEBI" id="CHEBI:18420"/>
    </ligand>
</feature>
<feature type="binding site" evidence="1">
    <location>
        <position position="112"/>
    </location>
    <ligand>
        <name>3-methyl-2-oxobutanoate</name>
        <dbReference type="ChEBI" id="CHEBI:11851"/>
    </ligand>
</feature>
<feature type="binding site" evidence="1">
    <location>
        <position position="114"/>
    </location>
    <ligand>
        <name>Mg(2+)</name>
        <dbReference type="ChEBI" id="CHEBI:18420"/>
    </ligand>
</feature>
<reference key="1">
    <citation type="submission" date="2009-01" db="EMBL/GenBank/DDBJ databases">
        <title>Complete sequence of Chloroflexus sp. Y-400-fl.</title>
        <authorList>
            <consortium name="US DOE Joint Genome Institute"/>
            <person name="Lucas S."/>
            <person name="Copeland A."/>
            <person name="Lapidus A."/>
            <person name="Glavina del Rio T."/>
            <person name="Dalin E."/>
            <person name="Tice H."/>
            <person name="Bruce D."/>
            <person name="Goodwin L."/>
            <person name="Pitluck S."/>
            <person name="Sims D."/>
            <person name="Kiss H."/>
            <person name="Brettin T."/>
            <person name="Detter J.C."/>
            <person name="Han C."/>
            <person name="Larimer F."/>
            <person name="Land M."/>
            <person name="Hauser L."/>
            <person name="Kyrpides N."/>
            <person name="Ovchinnikova G."/>
            <person name="Bryant D.A."/>
            <person name="Richardson P."/>
        </authorList>
    </citation>
    <scope>NUCLEOTIDE SEQUENCE [LARGE SCALE GENOMIC DNA]</scope>
    <source>
        <strain>ATCC 29364 / DSM 637 / Y-400-fl</strain>
    </source>
</reference>
<protein>
    <recommendedName>
        <fullName evidence="1">3-methyl-2-oxobutanoate hydroxymethyltransferase</fullName>
        <ecNumber evidence="1">2.1.2.11</ecNumber>
    </recommendedName>
    <alternativeName>
        <fullName evidence="1">Ketopantoate hydroxymethyltransferase</fullName>
        <shortName evidence="1">KPHMT</shortName>
    </alternativeName>
</protein>
<proteinExistence type="inferred from homology"/>
<comment type="function">
    <text evidence="1">Catalyzes the reversible reaction in which hydroxymethyl group from 5,10-methylenetetrahydrofolate is transferred onto alpha-ketoisovalerate to form ketopantoate.</text>
</comment>
<comment type="catalytic activity">
    <reaction evidence="1">
        <text>3-methyl-2-oxobutanoate + (6R)-5,10-methylene-5,6,7,8-tetrahydrofolate + H2O = 2-dehydropantoate + (6S)-5,6,7,8-tetrahydrofolate</text>
        <dbReference type="Rhea" id="RHEA:11824"/>
        <dbReference type="ChEBI" id="CHEBI:11561"/>
        <dbReference type="ChEBI" id="CHEBI:11851"/>
        <dbReference type="ChEBI" id="CHEBI:15377"/>
        <dbReference type="ChEBI" id="CHEBI:15636"/>
        <dbReference type="ChEBI" id="CHEBI:57453"/>
        <dbReference type="EC" id="2.1.2.11"/>
    </reaction>
</comment>
<comment type="cofactor">
    <cofactor evidence="1">
        <name>Mg(2+)</name>
        <dbReference type="ChEBI" id="CHEBI:18420"/>
    </cofactor>
    <text evidence="1">Binds 1 Mg(2+) ion per subunit.</text>
</comment>
<comment type="pathway">
    <text evidence="1">Cofactor biosynthesis; (R)-pantothenate biosynthesis; (R)-pantoate from 3-methyl-2-oxobutanoate: step 1/2.</text>
</comment>
<comment type="subunit">
    <text evidence="1">Homodecamer; pentamer of dimers.</text>
</comment>
<comment type="subcellular location">
    <subcellularLocation>
        <location evidence="1">Cytoplasm</location>
    </subcellularLocation>
</comment>
<comment type="similarity">
    <text evidence="1">Belongs to the PanB family.</text>
</comment>
<evidence type="ECO:0000255" key="1">
    <source>
        <dbReference type="HAMAP-Rule" id="MF_00156"/>
    </source>
</evidence>
<evidence type="ECO:0000256" key="2">
    <source>
        <dbReference type="SAM" id="MobiDB-lite"/>
    </source>
</evidence>
<dbReference type="EC" id="2.1.2.11" evidence="1"/>
<dbReference type="EMBL" id="CP001364">
    <property type="protein sequence ID" value="ACM53774.1"/>
    <property type="molecule type" value="Genomic_DNA"/>
</dbReference>
<dbReference type="SMR" id="B9LII0"/>
<dbReference type="KEGG" id="chl:Chy400_2380"/>
<dbReference type="HOGENOM" id="CLU_036645_1_0_0"/>
<dbReference type="OrthoDB" id="9781789at2"/>
<dbReference type="UniPathway" id="UPA00028">
    <property type="reaction ID" value="UER00003"/>
</dbReference>
<dbReference type="GO" id="GO:0005737">
    <property type="term" value="C:cytoplasm"/>
    <property type="evidence" value="ECO:0007669"/>
    <property type="project" value="UniProtKB-SubCell"/>
</dbReference>
<dbReference type="GO" id="GO:0003864">
    <property type="term" value="F:3-methyl-2-oxobutanoate hydroxymethyltransferase activity"/>
    <property type="evidence" value="ECO:0007669"/>
    <property type="project" value="UniProtKB-UniRule"/>
</dbReference>
<dbReference type="GO" id="GO:0000287">
    <property type="term" value="F:magnesium ion binding"/>
    <property type="evidence" value="ECO:0007669"/>
    <property type="project" value="TreeGrafter"/>
</dbReference>
<dbReference type="GO" id="GO:0015940">
    <property type="term" value="P:pantothenate biosynthetic process"/>
    <property type="evidence" value="ECO:0007669"/>
    <property type="project" value="UniProtKB-UniRule"/>
</dbReference>
<dbReference type="CDD" id="cd06557">
    <property type="entry name" value="KPHMT-like"/>
    <property type="match status" value="1"/>
</dbReference>
<dbReference type="FunFam" id="3.20.20.60:FF:000003">
    <property type="entry name" value="3-methyl-2-oxobutanoate hydroxymethyltransferase"/>
    <property type="match status" value="1"/>
</dbReference>
<dbReference type="Gene3D" id="3.20.20.60">
    <property type="entry name" value="Phosphoenolpyruvate-binding domains"/>
    <property type="match status" value="1"/>
</dbReference>
<dbReference type="HAMAP" id="MF_00156">
    <property type="entry name" value="PanB"/>
    <property type="match status" value="1"/>
</dbReference>
<dbReference type="InterPro" id="IPR003700">
    <property type="entry name" value="Pantoate_hydroxy_MeTrfase"/>
</dbReference>
<dbReference type="InterPro" id="IPR015813">
    <property type="entry name" value="Pyrv/PenolPyrv_kinase-like_dom"/>
</dbReference>
<dbReference type="InterPro" id="IPR040442">
    <property type="entry name" value="Pyrv_kinase-like_dom_sf"/>
</dbReference>
<dbReference type="NCBIfam" id="TIGR00222">
    <property type="entry name" value="panB"/>
    <property type="match status" value="1"/>
</dbReference>
<dbReference type="NCBIfam" id="NF001452">
    <property type="entry name" value="PRK00311.1"/>
    <property type="match status" value="1"/>
</dbReference>
<dbReference type="PANTHER" id="PTHR20881">
    <property type="entry name" value="3-METHYL-2-OXOBUTANOATE HYDROXYMETHYLTRANSFERASE"/>
    <property type="match status" value="1"/>
</dbReference>
<dbReference type="PANTHER" id="PTHR20881:SF0">
    <property type="entry name" value="3-METHYL-2-OXOBUTANOATE HYDROXYMETHYLTRANSFERASE"/>
    <property type="match status" value="1"/>
</dbReference>
<dbReference type="Pfam" id="PF02548">
    <property type="entry name" value="Pantoate_transf"/>
    <property type="match status" value="1"/>
</dbReference>
<dbReference type="PIRSF" id="PIRSF000388">
    <property type="entry name" value="Pantoate_hydroxy_MeTrfase"/>
    <property type="match status" value="1"/>
</dbReference>
<dbReference type="SUPFAM" id="SSF51621">
    <property type="entry name" value="Phosphoenolpyruvate/pyruvate domain"/>
    <property type="match status" value="1"/>
</dbReference>
<keyword id="KW-0963">Cytoplasm</keyword>
<keyword id="KW-0460">Magnesium</keyword>
<keyword id="KW-0479">Metal-binding</keyword>
<keyword id="KW-0566">Pantothenate biosynthesis</keyword>
<keyword id="KW-0808">Transferase</keyword>
<accession>B9LII0</accession>